<gene>
    <name evidence="1" type="primary">pheT</name>
    <name type="ordered locus">bbp_124</name>
</gene>
<name>SYFB_BUCBP</name>
<sequence length="802" mass="92733">MEFSEKWLLDWLGFSISNVFYEQMTKSGIEVEAIAKISKNFERVIVGEVVERLYVNTMHNIVFLRVKLSEKKMIFSISSNDIEFSRGTKIAIATQDSKLFNNRLISMLRFKEKISEGMVCSFKDLGILNIKNKIVEICSEVPVGTDISKFLWFDDDRIIKVSSAPNRADGMSILGIARDMSALNNLCLPTLKEYHINITNHEKFRILINIPDVCLNFIGRTIQSVNLNRQTPLWILERLRRSSISSENVLVDIINYVLIELGQPIFSFNIHGIVQNIIIRTARDNEQFFDSCSQRVPIDKRTILLSDDKEILVLGNHTNSYNSRLSLSSHNIFLGCALFNPEYINNDSHFNFGFKNKITEYYSRGVDSDIQYKALNYVTYLVLKICGGNASNVVLANSSRVTVIQKKIFVLKKTLHRYVNNIISDTLVVKYLLQLGYLVEKQKHCWLVIPPSWRFDIQIQEDVISDLVRVFGYHNIPACALVTNYKLVHDDNIYTSLNRIKLLLVDLGYNEVITYSFVDSQIQKYLFPKRKQFFLLNPISRKMSSMRLSLWNGLLSSVLYNQNRQEKVMRFFESGLCFEEDGNEYLGVKQDLYLAGVISGYKNETDWRSFNKIVSFYDLKGDIELIMALLRKLDKVSFKKMLFQNLCPKQSAAIYFEREMIGVIGVISSNISKKMGLKYKTIVFELIWKKIAQSNDYRIRDVSLYPRCSRDISIIVNDSIAADEILKVSKNVFLDKIVEVKLFDVFYGKNVGLNKKSLSLRFIFGSSKRTLSEEIISNCLNECIRILQEKFNAILRDRNFLF</sequence>
<reference key="1">
    <citation type="journal article" date="2003" name="Proc. Natl. Acad. Sci. U.S.A.">
        <title>Reductive genome evolution in Buchnera aphidicola.</title>
        <authorList>
            <person name="van Ham R.C.H.J."/>
            <person name="Kamerbeek J."/>
            <person name="Palacios C."/>
            <person name="Rausell C."/>
            <person name="Abascal F."/>
            <person name="Bastolla U."/>
            <person name="Fernandez J.M."/>
            <person name="Jimenez L."/>
            <person name="Postigo M."/>
            <person name="Silva F.J."/>
            <person name="Tamames J."/>
            <person name="Viguera E."/>
            <person name="Latorre A."/>
            <person name="Valencia A."/>
            <person name="Moran F."/>
            <person name="Moya A."/>
        </authorList>
    </citation>
    <scope>NUCLEOTIDE SEQUENCE [LARGE SCALE GENOMIC DNA]</scope>
    <source>
        <strain>Bp</strain>
    </source>
</reference>
<dbReference type="EC" id="6.1.1.20" evidence="1"/>
<dbReference type="EMBL" id="AE016826">
    <property type="protein sequence ID" value="AAO26858.1"/>
    <property type="molecule type" value="Genomic_DNA"/>
</dbReference>
<dbReference type="RefSeq" id="WP_011091259.1">
    <property type="nucleotide sequence ID" value="NC_004545.1"/>
</dbReference>
<dbReference type="SMR" id="P59505"/>
<dbReference type="STRING" id="224915.bbp_124"/>
<dbReference type="KEGG" id="bab:bbp_124"/>
<dbReference type="eggNOG" id="COG0072">
    <property type="taxonomic scope" value="Bacteria"/>
</dbReference>
<dbReference type="HOGENOM" id="CLU_016891_0_0_6"/>
<dbReference type="OrthoDB" id="9805455at2"/>
<dbReference type="Proteomes" id="UP000000601">
    <property type="component" value="Chromosome"/>
</dbReference>
<dbReference type="GO" id="GO:0009328">
    <property type="term" value="C:phenylalanine-tRNA ligase complex"/>
    <property type="evidence" value="ECO:0007669"/>
    <property type="project" value="TreeGrafter"/>
</dbReference>
<dbReference type="GO" id="GO:0005524">
    <property type="term" value="F:ATP binding"/>
    <property type="evidence" value="ECO:0007669"/>
    <property type="project" value="UniProtKB-UniRule"/>
</dbReference>
<dbReference type="GO" id="GO:0000287">
    <property type="term" value="F:magnesium ion binding"/>
    <property type="evidence" value="ECO:0007669"/>
    <property type="project" value="UniProtKB-UniRule"/>
</dbReference>
<dbReference type="GO" id="GO:0004826">
    <property type="term" value="F:phenylalanine-tRNA ligase activity"/>
    <property type="evidence" value="ECO:0007669"/>
    <property type="project" value="UniProtKB-UniRule"/>
</dbReference>
<dbReference type="GO" id="GO:0000049">
    <property type="term" value="F:tRNA binding"/>
    <property type="evidence" value="ECO:0007669"/>
    <property type="project" value="UniProtKB-KW"/>
</dbReference>
<dbReference type="GO" id="GO:0006432">
    <property type="term" value="P:phenylalanyl-tRNA aminoacylation"/>
    <property type="evidence" value="ECO:0007669"/>
    <property type="project" value="UniProtKB-UniRule"/>
</dbReference>
<dbReference type="CDD" id="cd00769">
    <property type="entry name" value="PheRS_beta_core"/>
    <property type="match status" value="1"/>
</dbReference>
<dbReference type="CDD" id="cd02796">
    <property type="entry name" value="tRNA_bind_bactPheRS"/>
    <property type="match status" value="1"/>
</dbReference>
<dbReference type="FunFam" id="3.30.930.10:FF:000022">
    <property type="entry name" value="Phenylalanine--tRNA ligase beta subunit"/>
    <property type="match status" value="1"/>
</dbReference>
<dbReference type="Gene3D" id="3.30.56.10">
    <property type="match status" value="2"/>
</dbReference>
<dbReference type="Gene3D" id="3.30.930.10">
    <property type="entry name" value="Bira Bifunctional Protein, Domain 2"/>
    <property type="match status" value="1"/>
</dbReference>
<dbReference type="Gene3D" id="3.30.70.380">
    <property type="entry name" value="Ferrodoxin-fold anticodon-binding domain"/>
    <property type="match status" value="1"/>
</dbReference>
<dbReference type="Gene3D" id="2.40.50.140">
    <property type="entry name" value="Nucleic acid-binding proteins"/>
    <property type="match status" value="1"/>
</dbReference>
<dbReference type="Gene3D" id="3.50.40.10">
    <property type="entry name" value="Phenylalanyl-trna Synthetase, Chain B, domain 3"/>
    <property type="match status" value="1"/>
</dbReference>
<dbReference type="HAMAP" id="MF_00283">
    <property type="entry name" value="Phe_tRNA_synth_beta1"/>
    <property type="match status" value="1"/>
</dbReference>
<dbReference type="InterPro" id="IPR045864">
    <property type="entry name" value="aa-tRNA-synth_II/BPL/LPL"/>
</dbReference>
<dbReference type="InterPro" id="IPR005146">
    <property type="entry name" value="B3/B4_tRNA-bd"/>
</dbReference>
<dbReference type="InterPro" id="IPR009061">
    <property type="entry name" value="DNA-bd_dom_put_sf"/>
</dbReference>
<dbReference type="InterPro" id="IPR005121">
    <property type="entry name" value="Fdx_antiC-bd"/>
</dbReference>
<dbReference type="InterPro" id="IPR036690">
    <property type="entry name" value="Fdx_antiC-bd_sf"/>
</dbReference>
<dbReference type="InterPro" id="IPR012340">
    <property type="entry name" value="NA-bd_OB-fold"/>
</dbReference>
<dbReference type="InterPro" id="IPR045060">
    <property type="entry name" value="Phe-tRNA-ligase_IIc_bsu"/>
</dbReference>
<dbReference type="InterPro" id="IPR004532">
    <property type="entry name" value="Phe-tRNA-ligase_IIc_bsu_bact"/>
</dbReference>
<dbReference type="InterPro" id="IPR020825">
    <property type="entry name" value="Phe-tRNA_synthase-like_B3/B4"/>
</dbReference>
<dbReference type="InterPro" id="IPR041616">
    <property type="entry name" value="PheRS_beta_core"/>
</dbReference>
<dbReference type="InterPro" id="IPR002547">
    <property type="entry name" value="tRNA-bd_dom"/>
</dbReference>
<dbReference type="InterPro" id="IPR033714">
    <property type="entry name" value="tRNA_bind_bactPheRS"/>
</dbReference>
<dbReference type="InterPro" id="IPR005147">
    <property type="entry name" value="tRNA_synthase_B5-dom"/>
</dbReference>
<dbReference type="NCBIfam" id="TIGR00472">
    <property type="entry name" value="pheT_bact"/>
    <property type="match status" value="1"/>
</dbReference>
<dbReference type="PANTHER" id="PTHR10947:SF0">
    <property type="entry name" value="PHENYLALANINE--TRNA LIGASE BETA SUBUNIT"/>
    <property type="match status" value="1"/>
</dbReference>
<dbReference type="PANTHER" id="PTHR10947">
    <property type="entry name" value="PHENYLALANYL-TRNA SYNTHETASE BETA CHAIN AND LEUCINE-RICH REPEAT-CONTAINING PROTEIN 47"/>
    <property type="match status" value="1"/>
</dbReference>
<dbReference type="Pfam" id="PF03483">
    <property type="entry name" value="B3_4"/>
    <property type="match status" value="1"/>
</dbReference>
<dbReference type="Pfam" id="PF03484">
    <property type="entry name" value="B5"/>
    <property type="match status" value="1"/>
</dbReference>
<dbReference type="Pfam" id="PF03147">
    <property type="entry name" value="FDX-ACB"/>
    <property type="match status" value="1"/>
</dbReference>
<dbReference type="Pfam" id="PF17759">
    <property type="entry name" value="tRNA_synthFbeta"/>
    <property type="match status" value="1"/>
</dbReference>
<dbReference type="SMART" id="SM00873">
    <property type="entry name" value="B3_4"/>
    <property type="match status" value="1"/>
</dbReference>
<dbReference type="SMART" id="SM00874">
    <property type="entry name" value="B5"/>
    <property type="match status" value="1"/>
</dbReference>
<dbReference type="SMART" id="SM00896">
    <property type="entry name" value="FDX-ACB"/>
    <property type="match status" value="1"/>
</dbReference>
<dbReference type="SUPFAM" id="SSF54991">
    <property type="entry name" value="Anticodon-binding domain of PheRS"/>
    <property type="match status" value="1"/>
</dbReference>
<dbReference type="SUPFAM" id="SSF55681">
    <property type="entry name" value="Class II aaRS and biotin synthetases"/>
    <property type="match status" value="1"/>
</dbReference>
<dbReference type="SUPFAM" id="SSF50249">
    <property type="entry name" value="Nucleic acid-binding proteins"/>
    <property type="match status" value="1"/>
</dbReference>
<dbReference type="SUPFAM" id="SSF56037">
    <property type="entry name" value="PheT/TilS domain"/>
    <property type="match status" value="1"/>
</dbReference>
<dbReference type="SUPFAM" id="SSF46955">
    <property type="entry name" value="Putative DNA-binding domain"/>
    <property type="match status" value="1"/>
</dbReference>
<dbReference type="PROSITE" id="PS51483">
    <property type="entry name" value="B5"/>
    <property type="match status" value="1"/>
</dbReference>
<dbReference type="PROSITE" id="PS51447">
    <property type="entry name" value="FDX_ACB"/>
    <property type="match status" value="1"/>
</dbReference>
<dbReference type="PROSITE" id="PS50886">
    <property type="entry name" value="TRBD"/>
    <property type="match status" value="1"/>
</dbReference>
<organism>
    <name type="scientific">Buchnera aphidicola subsp. Baizongia pistaciae (strain Bp)</name>
    <dbReference type="NCBI Taxonomy" id="224915"/>
    <lineage>
        <taxon>Bacteria</taxon>
        <taxon>Pseudomonadati</taxon>
        <taxon>Pseudomonadota</taxon>
        <taxon>Gammaproteobacteria</taxon>
        <taxon>Enterobacterales</taxon>
        <taxon>Erwiniaceae</taxon>
        <taxon>Buchnera</taxon>
    </lineage>
</organism>
<feature type="chain" id="PRO_0000126858" description="Phenylalanine--tRNA ligase beta subunit">
    <location>
        <begin position="1"/>
        <end position="802"/>
    </location>
</feature>
<feature type="domain" description="tRNA-binding" evidence="1">
    <location>
        <begin position="38"/>
        <end position="148"/>
    </location>
</feature>
<feature type="domain" description="B5" evidence="1">
    <location>
        <begin position="403"/>
        <end position="478"/>
    </location>
</feature>
<feature type="domain" description="FDX-ACB" evidence="1">
    <location>
        <begin position="703"/>
        <end position="796"/>
    </location>
</feature>
<feature type="binding site" evidence="1">
    <location>
        <position position="456"/>
    </location>
    <ligand>
        <name>Mg(2+)</name>
        <dbReference type="ChEBI" id="CHEBI:18420"/>
        <note>shared with alpha subunit</note>
    </ligand>
</feature>
<feature type="binding site" evidence="1">
    <location>
        <position position="462"/>
    </location>
    <ligand>
        <name>Mg(2+)</name>
        <dbReference type="ChEBI" id="CHEBI:18420"/>
        <note>shared with alpha subunit</note>
    </ligand>
</feature>
<feature type="binding site" evidence="1">
    <location>
        <position position="466"/>
    </location>
    <ligand>
        <name>Mg(2+)</name>
        <dbReference type="ChEBI" id="CHEBI:18420"/>
        <note>shared with alpha subunit</note>
    </ligand>
</feature>
<keyword id="KW-0030">Aminoacyl-tRNA synthetase</keyword>
<keyword id="KW-0067">ATP-binding</keyword>
<keyword id="KW-0963">Cytoplasm</keyword>
<keyword id="KW-0436">Ligase</keyword>
<keyword id="KW-0460">Magnesium</keyword>
<keyword id="KW-0479">Metal-binding</keyword>
<keyword id="KW-0547">Nucleotide-binding</keyword>
<keyword id="KW-0648">Protein biosynthesis</keyword>
<keyword id="KW-1185">Reference proteome</keyword>
<keyword id="KW-0694">RNA-binding</keyword>
<keyword id="KW-0820">tRNA-binding</keyword>
<accession>P59505</accession>
<proteinExistence type="inferred from homology"/>
<comment type="catalytic activity">
    <reaction evidence="1">
        <text>tRNA(Phe) + L-phenylalanine + ATP = L-phenylalanyl-tRNA(Phe) + AMP + diphosphate + H(+)</text>
        <dbReference type="Rhea" id="RHEA:19413"/>
        <dbReference type="Rhea" id="RHEA-COMP:9668"/>
        <dbReference type="Rhea" id="RHEA-COMP:9699"/>
        <dbReference type="ChEBI" id="CHEBI:15378"/>
        <dbReference type="ChEBI" id="CHEBI:30616"/>
        <dbReference type="ChEBI" id="CHEBI:33019"/>
        <dbReference type="ChEBI" id="CHEBI:58095"/>
        <dbReference type="ChEBI" id="CHEBI:78442"/>
        <dbReference type="ChEBI" id="CHEBI:78531"/>
        <dbReference type="ChEBI" id="CHEBI:456215"/>
        <dbReference type="EC" id="6.1.1.20"/>
    </reaction>
</comment>
<comment type="cofactor">
    <cofactor evidence="1">
        <name>Mg(2+)</name>
        <dbReference type="ChEBI" id="CHEBI:18420"/>
    </cofactor>
    <text evidence="1">Binds 2 magnesium ions per tetramer.</text>
</comment>
<comment type="subunit">
    <text evidence="1">Tetramer of two alpha and two beta subunits.</text>
</comment>
<comment type="subcellular location">
    <subcellularLocation>
        <location evidence="1">Cytoplasm</location>
    </subcellularLocation>
</comment>
<comment type="similarity">
    <text evidence="1">Belongs to the phenylalanyl-tRNA synthetase beta subunit family. Type 1 subfamily.</text>
</comment>
<comment type="caution">
    <text evidence="2">Lacks the conserved glutamate residue in position 465 that binds magnesium; it is replaced by a serine residue.</text>
</comment>
<evidence type="ECO:0000255" key="1">
    <source>
        <dbReference type="HAMAP-Rule" id="MF_00283"/>
    </source>
</evidence>
<evidence type="ECO:0000305" key="2"/>
<protein>
    <recommendedName>
        <fullName evidence="1">Phenylalanine--tRNA ligase beta subunit</fullName>
        <ecNumber evidence="1">6.1.1.20</ecNumber>
    </recommendedName>
    <alternativeName>
        <fullName evidence="1">Phenylalanyl-tRNA synthetase beta subunit</fullName>
        <shortName evidence="1">PheRS</shortName>
    </alternativeName>
</protein>